<keyword id="KW-1015">Disulfide bond</keyword>
<keyword id="KW-0372">Hormone</keyword>
<keyword id="KW-0421">Lactation</keyword>
<keyword id="KW-0597">Phosphoprotein</keyword>
<keyword id="KW-1185">Reference proteome</keyword>
<keyword id="KW-0964">Secreted</keyword>
<keyword id="KW-0732">Signal</keyword>
<protein>
    <recommendedName>
        <fullName>Prolactin</fullName>
        <shortName>PRL</shortName>
    </recommendedName>
</protein>
<evidence type="ECO:0000250" key="1"/>
<evidence type="ECO:0000250" key="2">
    <source>
        <dbReference type="UniProtKB" id="P01236"/>
    </source>
</evidence>
<evidence type="ECO:0000250" key="3">
    <source>
        <dbReference type="UniProtKB" id="P01239"/>
    </source>
</evidence>
<evidence type="ECO:0000305" key="4"/>
<name>PRL_MESAU</name>
<sequence length="226" mass="25582">MNSQGSDRKAVTLLLLVMSNLLFCQNAHPLPICPGGNCQMPLQELFDRVIMLSHYIYMLSADMFIELDKQYAQDHEFIAKAISDCPTSSLATPEGKEEAQQVPPEVLLNLILSLVHSWNDPLFQLVTEVDGIHEASDAIISRAKEIGEQNKRLLEGIEKILGQAYPEAKGNEIYSVWSQFPSLQGVDEESRDLAIYNKVRCLRRDSHKVDNYLKLLRCRVVHNNNC</sequence>
<organism>
    <name type="scientific">Mesocricetus auratus</name>
    <name type="common">Golden hamster</name>
    <dbReference type="NCBI Taxonomy" id="10036"/>
    <lineage>
        <taxon>Eukaryota</taxon>
        <taxon>Metazoa</taxon>
        <taxon>Chordata</taxon>
        <taxon>Craniata</taxon>
        <taxon>Vertebrata</taxon>
        <taxon>Euteleostomi</taxon>
        <taxon>Mammalia</taxon>
        <taxon>Eutheria</taxon>
        <taxon>Euarchontoglires</taxon>
        <taxon>Glires</taxon>
        <taxon>Rodentia</taxon>
        <taxon>Myomorpha</taxon>
        <taxon>Muroidea</taxon>
        <taxon>Cricetidae</taxon>
        <taxon>Cricetinae</taxon>
        <taxon>Mesocricetus</taxon>
    </lineage>
</organism>
<proteinExistence type="evidence at transcript level"/>
<dbReference type="EMBL" id="S66296">
    <property type="protein sequence ID" value="AAB20367.1"/>
    <property type="molecule type" value="mRNA"/>
</dbReference>
<dbReference type="PIR" id="A49159">
    <property type="entry name" value="A49159"/>
</dbReference>
<dbReference type="RefSeq" id="NP_001268581.1">
    <property type="nucleotide sequence ID" value="NM_001281652.1"/>
</dbReference>
<dbReference type="SMR" id="P37884"/>
<dbReference type="STRING" id="10036.ENSMAUP00000003859"/>
<dbReference type="GeneID" id="101843376"/>
<dbReference type="KEGG" id="maua:101843376"/>
<dbReference type="eggNOG" id="ENOG502QYU3">
    <property type="taxonomic scope" value="Eukaryota"/>
</dbReference>
<dbReference type="OrthoDB" id="9946219at2759"/>
<dbReference type="Proteomes" id="UP000189706">
    <property type="component" value="Unplaced"/>
</dbReference>
<dbReference type="GO" id="GO:0005615">
    <property type="term" value="C:extracellular space"/>
    <property type="evidence" value="ECO:0007669"/>
    <property type="project" value="TreeGrafter"/>
</dbReference>
<dbReference type="GO" id="GO:0005179">
    <property type="term" value="F:hormone activity"/>
    <property type="evidence" value="ECO:0007669"/>
    <property type="project" value="UniProtKB-KW"/>
</dbReference>
<dbReference type="GO" id="GO:0005148">
    <property type="term" value="F:prolactin receptor binding"/>
    <property type="evidence" value="ECO:0007669"/>
    <property type="project" value="TreeGrafter"/>
</dbReference>
<dbReference type="GO" id="GO:0007565">
    <property type="term" value="P:female pregnancy"/>
    <property type="evidence" value="ECO:0007669"/>
    <property type="project" value="TreeGrafter"/>
</dbReference>
<dbReference type="GO" id="GO:0007595">
    <property type="term" value="P:lactation"/>
    <property type="evidence" value="ECO:0007669"/>
    <property type="project" value="UniProtKB-KW"/>
</dbReference>
<dbReference type="GO" id="GO:0008284">
    <property type="term" value="P:positive regulation of cell population proliferation"/>
    <property type="evidence" value="ECO:0007669"/>
    <property type="project" value="TreeGrafter"/>
</dbReference>
<dbReference type="GO" id="GO:1903489">
    <property type="term" value="P:positive regulation of lactation"/>
    <property type="evidence" value="ECO:0007669"/>
    <property type="project" value="TreeGrafter"/>
</dbReference>
<dbReference type="GO" id="GO:0046427">
    <property type="term" value="P:positive regulation of receptor signaling pathway via JAK-STAT"/>
    <property type="evidence" value="ECO:0007669"/>
    <property type="project" value="TreeGrafter"/>
</dbReference>
<dbReference type="GO" id="GO:0031667">
    <property type="term" value="P:response to nutrient levels"/>
    <property type="evidence" value="ECO:0007669"/>
    <property type="project" value="TreeGrafter"/>
</dbReference>
<dbReference type="CDD" id="cd10288">
    <property type="entry name" value="prolactin_like"/>
    <property type="match status" value="1"/>
</dbReference>
<dbReference type="FunFam" id="1.20.1250.10:FF:000003">
    <property type="entry name" value="Prolactin"/>
    <property type="match status" value="1"/>
</dbReference>
<dbReference type="Gene3D" id="1.20.1250.10">
    <property type="match status" value="1"/>
</dbReference>
<dbReference type="InterPro" id="IPR009079">
    <property type="entry name" value="4_helix_cytokine-like_core"/>
</dbReference>
<dbReference type="InterPro" id="IPR001400">
    <property type="entry name" value="Somatotropin/Prolactin"/>
</dbReference>
<dbReference type="InterPro" id="IPR018116">
    <property type="entry name" value="Somatotropin_CS"/>
</dbReference>
<dbReference type="PANTHER" id="PTHR11417:SF5">
    <property type="entry name" value="PROLACTIN"/>
    <property type="match status" value="1"/>
</dbReference>
<dbReference type="PANTHER" id="PTHR11417">
    <property type="entry name" value="SOMATOTROPIN,PROLACTIN"/>
    <property type="match status" value="1"/>
</dbReference>
<dbReference type="Pfam" id="PF00103">
    <property type="entry name" value="Hormone_1"/>
    <property type="match status" value="1"/>
</dbReference>
<dbReference type="PRINTS" id="PR00836">
    <property type="entry name" value="SOMATOTROPIN"/>
</dbReference>
<dbReference type="SUPFAM" id="SSF47266">
    <property type="entry name" value="4-helical cytokines"/>
    <property type="match status" value="1"/>
</dbReference>
<dbReference type="PROSITE" id="PS00266">
    <property type="entry name" value="SOMATOTROPIN_1"/>
    <property type="match status" value="1"/>
</dbReference>
<dbReference type="PROSITE" id="PS00338">
    <property type="entry name" value="SOMATOTROPIN_2"/>
    <property type="match status" value="1"/>
</dbReference>
<feature type="signal peptide" evidence="1">
    <location>
        <begin position="1"/>
        <end position="29"/>
    </location>
</feature>
<feature type="chain" id="PRO_0000032918" description="Prolactin">
    <location>
        <begin position="30"/>
        <end position="226"/>
    </location>
</feature>
<feature type="modified residue" description="Phosphoserine" evidence="3">
    <location>
        <position position="53"/>
    </location>
</feature>
<feature type="modified residue" description="Phosphoserine" evidence="3">
    <location>
        <position position="117"/>
    </location>
</feature>
<feature type="disulfide bond" evidence="1">
    <location>
        <begin position="33"/>
        <end position="38"/>
    </location>
</feature>
<feature type="disulfide bond" evidence="1">
    <location>
        <begin position="85"/>
        <end position="201"/>
    </location>
</feature>
<feature type="disulfide bond" evidence="1">
    <location>
        <begin position="218"/>
        <end position="226"/>
    </location>
</feature>
<comment type="function">
    <text>Prolactin acts primarily on the mammary gland by promoting lactation.</text>
</comment>
<comment type="subunit">
    <text evidence="2">Interacts with PRLR.</text>
</comment>
<comment type="subcellular location">
    <subcellularLocation>
        <location>Secreted</location>
    </subcellularLocation>
</comment>
<comment type="similarity">
    <text evidence="4">Belongs to the somatotropin/prolactin family.</text>
</comment>
<gene>
    <name type="primary">PRL</name>
</gene>
<accession>P37884</accession>
<reference key="1">
    <citation type="journal article" date="1991" name="Endocrinology">
        <title>Sequence and expression of hamster prolactin and growth hormone messenger RNAs.</title>
        <authorList>
            <person name="Southard J.N."/>
            <person name="Sanchez-Jimenez F."/>
            <person name="Campbell G.T."/>
            <person name="Talamantes F."/>
        </authorList>
    </citation>
    <scope>NUCLEOTIDE SEQUENCE [MRNA]</scope>
</reference>